<name>NS1_I18A0</name>
<feature type="chain" id="PRO_0000310570" description="Non-structural protein 1">
    <location>
        <begin position="1"/>
        <end position="230"/>
    </location>
</feature>
<feature type="region of interest" description="RNA-binding and homodimerization" evidence="1">
    <location>
        <begin position="1"/>
        <end position="73"/>
    </location>
</feature>
<feature type="region of interest" description="CPSF4-binding" evidence="1">
    <location>
        <begin position="180"/>
        <end position="215"/>
    </location>
</feature>
<feature type="region of interest" description="Disordered" evidence="2">
    <location>
        <begin position="205"/>
        <end position="230"/>
    </location>
</feature>
<feature type="region of interest" description="PABPN1-binding" evidence="1">
    <location>
        <begin position="223"/>
        <end position="230"/>
    </location>
</feature>
<feature type="short sequence motif" description="Nuclear localization signal" evidence="1">
    <location>
        <begin position="34"/>
        <end position="38"/>
    </location>
</feature>
<feature type="short sequence motif" description="Nuclear export signal" evidence="1">
    <location>
        <begin position="137"/>
        <end position="146"/>
    </location>
</feature>
<feature type="helix" evidence="3">
    <location>
        <begin position="4"/>
        <end position="23"/>
    </location>
</feature>
<feature type="turn" evidence="3">
    <location>
        <begin position="24"/>
        <end position="26"/>
    </location>
</feature>
<feature type="helix" evidence="3">
    <location>
        <begin position="31"/>
        <end position="50"/>
    </location>
</feature>
<feature type="helix" evidence="3">
    <location>
        <begin position="54"/>
        <end position="71"/>
    </location>
</feature>
<feature type="strand" evidence="4">
    <location>
        <begin position="88"/>
        <end position="93"/>
    </location>
</feature>
<feature type="helix" evidence="4">
    <location>
        <begin position="95"/>
        <end position="99"/>
    </location>
</feature>
<feature type="strand" evidence="4">
    <location>
        <begin position="105"/>
        <end position="112"/>
    </location>
</feature>
<feature type="strand" evidence="4">
    <location>
        <begin position="115"/>
        <end position="120"/>
    </location>
</feature>
<feature type="strand" evidence="4">
    <location>
        <begin position="127"/>
        <end position="137"/>
    </location>
</feature>
<feature type="strand" evidence="4">
    <location>
        <begin position="140"/>
        <end position="151"/>
    </location>
</feature>
<feature type="strand" evidence="4">
    <location>
        <begin position="156"/>
        <end position="162"/>
    </location>
</feature>
<feature type="helix" evidence="4">
    <location>
        <begin position="171"/>
        <end position="187"/>
    </location>
</feature>
<feature type="strand" evidence="4">
    <location>
        <begin position="191"/>
        <end position="194"/>
    </location>
</feature>
<feature type="helix" evidence="4">
    <location>
        <begin position="196"/>
        <end position="203"/>
    </location>
</feature>
<gene>
    <name evidence="1" type="primary">NS</name>
</gene>
<dbReference type="EMBL" id="AF333238">
    <property type="protein sequence ID" value="AAK14368.1"/>
    <property type="molecule type" value="Genomic_RNA"/>
</dbReference>
<dbReference type="PDB" id="2N74">
    <property type="method" value="NMR"/>
    <property type="chains" value="A/B=1-73"/>
</dbReference>
<dbReference type="PDB" id="5UL6">
    <property type="method" value="X-ray"/>
    <property type="resolution" value="1.45 A"/>
    <property type="chains" value="M=210-221"/>
</dbReference>
<dbReference type="PDB" id="6ATV">
    <property type="method" value="X-ray"/>
    <property type="resolution" value="1.75 A"/>
    <property type="chains" value="M=210-221"/>
</dbReference>
<dbReference type="PDB" id="6DGK">
    <property type="method" value="X-ray"/>
    <property type="resolution" value="1.90 A"/>
    <property type="chains" value="A/B=86-205"/>
</dbReference>
<dbReference type="PDB" id="6NU0">
    <property type="method" value="NMR"/>
    <property type="chains" value="A=1-230"/>
</dbReference>
<dbReference type="PDB" id="6OX7">
    <property type="method" value="X-ray"/>
    <property type="resolution" value="2.75 A"/>
    <property type="chains" value="A/B=86-230"/>
</dbReference>
<dbReference type="PDB" id="6U28">
    <property type="method" value="X-ray"/>
    <property type="resolution" value="2.95 A"/>
    <property type="chains" value="A/B=86-230"/>
</dbReference>
<dbReference type="PDBsum" id="2N74"/>
<dbReference type="PDBsum" id="5UL6"/>
<dbReference type="PDBsum" id="6ATV"/>
<dbReference type="PDBsum" id="6DGK"/>
<dbReference type="PDBsum" id="6NU0"/>
<dbReference type="PDBsum" id="6OX7"/>
<dbReference type="PDBsum" id="6U28"/>
<dbReference type="BMRB" id="Q99AU3"/>
<dbReference type="SMR" id="Q99AU3"/>
<dbReference type="DIP" id="DIP-61813N"/>
<dbReference type="IntAct" id="Q99AU3">
    <property type="interactions" value="24"/>
</dbReference>
<dbReference type="Proteomes" id="UP000008430">
    <property type="component" value="Genome"/>
</dbReference>
<dbReference type="GO" id="GO:0030430">
    <property type="term" value="C:host cell cytoplasm"/>
    <property type="evidence" value="ECO:0007669"/>
    <property type="project" value="UniProtKB-SubCell"/>
</dbReference>
<dbReference type="GO" id="GO:0042025">
    <property type="term" value="C:host cell nucleus"/>
    <property type="evidence" value="ECO:0007669"/>
    <property type="project" value="UniProtKB-SubCell"/>
</dbReference>
<dbReference type="GO" id="GO:0030291">
    <property type="term" value="F:protein serine/threonine kinase inhibitor activity"/>
    <property type="evidence" value="ECO:0007669"/>
    <property type="project" value="UniProtKB-KW"/>
</dbReference>
<dbReference type="GO" id="GO:0003723">
    <property type="term" value="F:RNA binding"/>
    <property type="evidence" value="ECO:0007669"/>
    <property type="project" value="UniProtKB-KW"/>
</dbReference>
<dbReference type="GO" id="GO:0039540">
    <property type="term" value="P:symbiont-mediated suppression of host cytoplasmic pattern recognition receptor signaling pathway via inhibition of RIG-I activity"/>
    <property type="evidence" value="ECO:0007669"/>
    <property type="project" value="UniProtKB-KW"/>
</dbReference>
<dbReference type="GO" id="GO:0039657">
    <property type="term" value="P:symbiont-mediated suppression of host gene expression"/>
    <property type="evidence" value="ECO:0007669"/>
    <property type="project" value="UniProtKB-KW"/>
</dbReference>
<dbReference type="GO" id="GO:0039524">
    <property type="term" value="P:symbiont-mediated suppression of host mRNA processing"/>
    <property type="evidence" value="ECO:0007669"/>
    <property type="project" value="UniProtKB-KW"/>
</dbReference>
<dbReference type="GO" id="GO:0039580">
    <property type="term" value="P:symbiont-mediated suppression of host PKR/eIFalpha signaling"/>
    <property type="evidence" value="ECO:0007669"/>
    <property type="project" value="UniProtKB-KW"/>
</dbReference>
<dbReference type="GO" id="GO:0039502">
    <property type="term" value="P:symbiont-mediated suppression of host type I interferon-mediated signaling pathway"/>
    <property type="evidence" value="ECO:0007669"/>
    <property type="project" value="UniProtKB-KW"/>
</dbReference>
<dbReference type="FunFam" id="1.10.287.10:FF:000001">
    <property type="entry name" value="Non-structural protein 1"/>
    <property type="match status" value="1"/>
</dbReference>
<dbReference type="FunFam" id="3.30.420.330:FF:000001">
    <property type="entry name" value="Non-structural protein 1"/>
    <property type="match status" value="1"/>
</dbReference>
<dbReference type="Gene3D" id="3.30.420.330">
    <property type="entry name" value="Influenza virus non-structural protein, effector domain"/>
    <property type="match status" value="1"/>
</dbReference>
<dbReference type="Gene3D" id="1.10.287.10">
    <property type="entry name" value="S15/NS1, RNA-binding"/>
    <property type="match status" value="1"/>
</dbReference>
<dbReference type="HAMAP" id="MF_04066">
    <property type="entry name" value="INFV_NS1"/>
    <property type="match status" value="1"/>
</dbReference>
<dbReference type="InterPro" id="IPR004208">
    <property type="entry name" value="NS1"/>
</dbReference>
<dbReference type="InterPro" id="IPR000256">
    <property type="entry name" value="NS1A"/>
</dbReference>
<dbReference type="InterPro" id="IPR038064">
    <property type="entry name" value="NS1A_effect_dom-like_sf"/>
</dbReference>
<dbReference type="InterPro" id="IPR009068">
    <property type="entry name" value="uS15_NS1_RNA-bd_sf"/>
</dbReference>
<dbReference type="Pfam" id="PF00600">
    <property type="entry name" value="Flu_NS1"/>
    <property type="match status" value="1"/>
</dbReference>
<dbReference type="SUPFAM" id="SSF143021">
    <property type="entry name" value="Ns1 effector domain-like"/>
    <property type="match status" value="1"/>
</dbReference>
<dbReference type="SUPFAM" id="SSF47060">
    <property type="entry name" value="S15/NS1 RNA-binding domain"/>
    <property type="match status" value="1"/>
</dbReference>
<keyword id="KW-0002">3D-structure</keyword>
<keyword id="KW-0025">Alternative splicing</keyword>
<keyword id="KW-1262">Eukaryotic host gene expression shutoff by virus</keyword>
<keyword id="KW-1035">Host cytoplasm</keyword>
<keyword id="KW-1190">Host gene expression shutoff by virus</keyword>
<keyword id="KW-1192">Host mRNA suppression by virus</keyword>
<keyword id="KW-1048">Host nucleus</keyword>
<keyword id="KW-0945">Host-virus interaction</keyword>
<keyword id="KW-1090">Inhibition of host innate immune response by virus</keyword>
<keyword id="KW-1114">Inhibition of host interferon signaling pathway by virus</keyword>
<keyword id="KW-1102">Inhibition of host PKR by virus</keyword>
<keyword id="KW-1103">Inhibition of host pre-mRNA processing by virus</keyword>
<keyword id="KW-1088">Inhibition of host RIG-I by virus</keyword>
<keyword id="KW-1113">Inhibition of host RLR pathway by virus</keyword>
<keyword id="KW-0922">Interferon antiviral system evasion</keyword>
<keyword id="KW-0694">RNA-binding</keyword>
<keyword id="KW-0832">Ubl conjugation</keyword>
<keyword id="KW-0899">Viral immunoevasion</keyword>
<organism>
    <name type="scientific">Influenza A virus (strain A/Brevig Mission/1/1918 H1N1)</name>
    <name type="common">Influenza A virus (strain A/South Carolina/1/1918 H1N1)</name>
    <dbReference type="NCBI Taxonomy" id="88776"/>
    <lineage>
        <taxon>Viruses</taxon>
        <taxon>Riboviria</taxon>
        <taxon>Orthornavirae</taxon>
        <taxon>Negarnaviricota</taxon>
        <taxon>Polyploviricotina</taxon>
        <taxon>Insthoviricetes</taxon>
        <taxon>Articulavirales</taxon>
        <taxon>Orthomyxoviridae</taxon>
        <taxon>Alphainfluenzavirus</taxon>
        <taxon>Alphainfluenzavirus influenzae</taxon>
        <taxon>Influenza A virus</taxon>
    </lineage>
</organism>
<organismHost>
    <name type="scientific">Aves</name>
    <dbReference type="NCBI Taxonomy" id="8782"/>
</organismHost>
<organismHost>
    <name type="scientific">Homo sapiens</name>
    <name type="common">Human</name>
    <dbReference type="NCBI Taxonomy" id="9606"/>
</organismHost>
<organismHost>
    <name type="scientific">Sus scrofa</name>
    <name type="common">Pig</name>
    <dbReference type="NCBI Taxonomy" id="9823"/>
</organismHost>
<sequence>MDSNTVSSFQVDCFLWHVRKRFADQELGDAPFLDRLRRDQKSLRGRGSTLGLDIETATRAGKQIVERILKEESDEALKMTIASVPASRYLTDMTLEEMSRDWFMLMPKQKVAGSLCIRMDQAIMDKNIILKANFSVIFDRLETLILLRAFTEEGAIVGEISPLPSLPGHTDEDVKNAVGVLIGGLEWNDNTVRVSETLQRFAWRSSNENGRPPLPPKQKRKMARTIKSEV</sequence>
<proteinExistence type="evidence at protein level"/>
<comment type="function">
    <text evidence="1">Inhibits post-transcriptional processing of cellular pre-mRNA, by binding and inhibiting two cellular proteins that are required for the 3'-end processing of cellular pre-mRNAs: the 30 kDa cleavage and polyadenylation specificity factor/CPSF4 and the poly(A)-binding protein 2/PABPN1. In turn, unprocessed 3' end pre-mRNAs accumulate in the host nucleus and are no longer exported to the cytoplasm. Cellular protein synthesis is thereby shut off very early after virus infection. Viral protein synthesis is not affected by the inhibition of the cellular 3' end processing machinery because the poly(A) tails of viral mRNAs are produced by the viral polymerase through a stuttering mechanism. Prevents the establishment of the cellular antiviral state by inhibiting TRIM25-mediated RIGI ubiquitination, which normally triggers the antiviral transduction signal that leads to the activation of type I IFN genes by transcription factors IRF3 and IRF7. Also binds poly(A) and U6 snRNA. Inhibits the integrated stress response (ISR) in the infected cell by blocking dsRNA binding by EIF2AK2/PKR and further phosphorylation of EIF2S1/EIF-2ALPHA. Stress granule formation is thus inhibited, which allows protein synthesis and viral replication.</text>
</comment>
<comment type="subunit">
    <text evidence="1">Homodimer. Interacts with host TRIM25 (via coiled coil); this interaction specifically inhibits TRIM25 multimerization and TRIM25-mediated RIGI CARD ubiquitination. Interacts with human EIF2AK2/PKR, CPSF4, IVNS1ABP and PABPN1.</text>
</comment>
<comment type="interaction">
    <interactant intactId="EBI-6150155">
        <id>Q99AU3</id>
    </interactant>
    <interactant intactId="EBI-15577823">
        <id>O95786-1</id>
        <label>RIGI</label>
    </interactant>
    <organismsDiffer>true</organismsDiffer>
    <experiments>2</experiments>
</comment>
<comment type="subcellular location">
    <subcellularLocation>
        <location evidence="1">Host nucleus</location>
    </subcellularLocation>
    <subcellularLocation>
        <location evidence="1">Host cytoplasm</location>
    </subcellularLocation>
    <text evidence="1">In uninfected, transfected cells, NS1 is localized in the nucleus. Only in virus infected cells, the nuclear export signal is unveiled, presumably by a viral protein, and a fraction of NS1 is exported in the cytoplasm.</text>
</comment>
<comment type="alternative products">
    <event type="alternative splicing"/>
    <isoform>
        <id>Q99AU3-1</id>
        <name>NS1</name>
        <sequence type="displayed"/>
    </isoform>
    <isoform>
        <id>Q77IX1-1</id>
        <name>NEP</name>
        <name>NS2</name>
        <sequence type="external"/>
    </isoform>
</comment>
<comment type="domain">
    <text evidence="1">The dsRNA-binding region is required for suppression of RNA silencing.</text>
</comment>
<comment type="PTM">
    <text evidence="1">Upon interferon induction, ISGylated via host HERC5; this results in the impairment of NS1 interaction with RNA targets due to its inability to form homodimers and to interact with host EIF2AK2/PKR.</text>
</comment>
<comment type="miscellaneous">
    <text>South Carolina isolate has been sequenced from formalid fixed-lung tissues of a 21-year-old male which died in 1918 at Ft. Jackson, SC. Brevig Mission isolate has been sequenced from lung tissues of an Inuit woman buried in the permafrost in a gravesite near Brevig Mission, Alaska. This sample was recovered by John Hultin, retired pathologist.</text>
</comment>
<comment type="similarity">
    <text evidence="1">Belongs to the influenza A viruses NS1 family.</text>
</comment>
<evidence type="ECO:0000255" key="1">
    <source>
        <dbReference type="HAMAP-Rule" id="MF_04066"/>
    </source>
</evidence>
<evidence type="ECO:0000256" key="2">
    <source>
        <dbReference type="SAM" id="MobiDB-lite"/>
    </source>
</evidence>
<evidence type="ECO:0007829" key="3">
    <source>
        <dbReference type="PDB" id="2N74"/>
    </source>
</evidence>
<evidence type="ECO:0007829" key="4">
    <source>
        <dbReference type="PDB" id="6DGK"/>
    </source>
</evidence>
<reference key="1">
    <citation type="journal article" date="2001" name="Proc. Natl. Acad. Sci. U.S.A.">
        <title>Sequence of the 1918 pandemic influenza virus nonstructural gene (NS) segment and characterization of recombinant viruses bearing the 1918 NS genes.</title>
        <authorList>
            <person name="Basler C.F."/>
            <person name="Reid A.H."/>
            <person name="Dybing J.K."/>
            <person name="Janczewski T.A."/>
            <person name="Fanning T.G."/>
            <person name="Zheng H."/>
            <person name="Salvatore M."/>
            <person name="Perdue M.L."/>
            <person name="Swayne D.E."/>
            <person name="Garcia-Sastre A."/>
            <person name="Palese P."/>
            <person name="Taubenberger J.K."/>
        </authorList>
    </citation>
    <scope>NUCLEOTIDE SEQUENCE [GENOMIC RNA]</scope>
</reference>
<reference key="2">
    <citation type="journal article" date="2009" name="Cell Host Microbe">
        <title>Influenza A virus NS1 targets the ubiquitin ligase TRIM25 to evade recognition by the host viral RNA sensor RIG-I.</title>
        <authorList>
            <person name="Gack M.U."/>
            <person name="Albrecht R.A."/>
            <person name="Urano T."/>
            <person name="Inn K.-S."/>
            <person name="Huang I.-C."/>
            <person name="Carnero E."/>
            <person name="Farzan M."/>
            <person name="Inoue S."/>
            <person name="Jung J.U."/>
            <person name="Garcia-Sastre A."/>
        </authorList>
    </citation>
    <scope>INTERACTION WITH HUMAN TRIM25</scope>
</reference>
<accession>Q99AU3</accession>
<protein>
    <recommendedName>
        <fullName evidence="1">Non-structural protein 1</fullName>
        <shortName evidence="1">NS1</shortName>
    </recommendedName>
    <alternativeName>
        <fullName evidence="1">NS1A</fullName>
    </alternativeName>
</protein>